<proteinExistence type="inferred from homology"/>
<reference key="1">
    <citation type="journal article" date="1988" name="Dokl. Akad. Nauk SSSR">
        <title>Comparative analysis of DNA-ligase genes of phages T6 and T4.</title>
        <authorList>
            <person name="Kaliman A.V."/>
            <person name="Zimin A.A."/>
            <person name="Nazipova N.N."/>
            <person name="Kryukov V.M."/>
            <person name="Tanyashin V.I."/>
            <person name="Kraev A.S."/>
            <person name="Mironova M.V."/>
            <person name="Skyrabin K.G."/>
            <person name="Baev A.A."/>
        </authorList>
    </citation>
    <scope>NUCLEOTIDE SEQUENCE [GENOMIC DNA]</scope>
</reference>
<name>DNLI_BPT6</name>
<organismHost>
    <name type="scientific">Escherichia coli</name>
    <dbReference type="NCBI Taxonomy" id="562"/>
</organismHost>
<gene>
    <name type="primary">30</name>
</gene>
<keyword id="KW-0067">ATP-binding</keyword>
<keyword id="KW-0227">DNA damage</keyword>
<keyword id="KW-0233">DNA recombination</keyword>
<keyword id="KW-0234">DNA repair</keyword>
<keyword id="KW-0235">DNA replication</keyword>
<keyword id="KW-0436">Ligase</keyword>
<keyword id="KW-0479">Metal-binding</keyword>
<keyword id="KW-0547">Nucleotide-binding</keyword>
<sequence length="487" mass="55267">MILKILNEIASIGSTKQKQAILEKNKDNELLKRVYRLTYSRGLQYYIKKWPKPGIATQSFGMLTLTDMLDFIEFTLATRKLTGNAAIEELTGYITDGKKDDVEVLRRVMMRDLECGASVSIANKVWPGLIPEQPQMLASSYDEKGINKNIKFPAFAQLKADGARCFAEVRGDELDDVRLLSRAGNEYLGLDLLKEELIKMTAEARQIHPEGVLIDGELVYHEQVKKEPEGLDFLFDAHPENSKVKDFTEVAESRTASNGIANKSLKGTISEKEAQCMKFQVWDYVPLVEVYGLPAFRLKYDVRFSKLEQMTSGYDKVILIENQVVNNLDEAKVIYKKYIDQGLEGIILKNIDGLWENARSKNLYKFKEVIDVDLKIVGIYPHRKDPTKAGGFILESECGKIKVNAGSGLKDKAGVKSHELDRTRIMENQNYYIGKILECECNGWLKSDGRTDYVKLFLPIAIRLREDKTKANTFEDVFGDFHEVTGL</sequence>
<evidence type="ECO:0000250" key="1"/>
<evidence type="ECO:0000250" key="2">
    <source>
        <dbReference type="UniProtKB" id="P00970"/>
    </source>
</evidence>
<evidence type="ECO:0000255" key="3">
    <source>
        <dbReference type="PROSITE-ProRule" id="PRU10135"/>
    </source>
</evidence>
<evidence type="ECO:0000305" key="4"/>
<protein>
    <recommendedName>
        <fullName>DNA ligase</fullName>
        <ecNumber evidence="3">6.5.1.1</ecNumber>
    </recommendedName>
    <alternativeName>
        <fullName>Polydeoxyribonucleotide synthase [ATP]</fullName>
    </alternativeName>
</protein>
<comment type="function">
    <text>DNA ligase, which is expressed in the early stage of lytic development, has been implicated in T4 DNA synthesis and genetic recombination. It may also play a role in T4 DNA repair.</text>
</comment>
<comment type="catalytic activity">
    <reaction evidence="3">
        <text>ATP + (deoxyribonucleotide)n-3'-hydroxyl + 5'-phospho-(deoxyribonucleotide)m = (deoxyribonucleotide)n+m + AMP + diphosphate.</text>
        <dbReference type="EC" id="6.5.1.1"/>
    </reaction>
</comment>
<comment type="cofactor">
    <cofactor evidence="1">
        <name>a divalent metal cation</name>
        <dbReference type="ChEBI" id="CHEBI:60240"/>
    </cofactor>
</comment>
<comment type="subunit">
    <text evidence="2">Interacts with the sliding clamp.</text>
</comment>
<comment type="similarity">
    <text evidence="4">Belongs to the ATP-dependent DNA ligase family.</text>
</comment>
<accession>P19088</accession>
<feature type="chain" id="PRO_0000059596" description="DNA ligase">
    <location>
        <begin position="1"/>
        <end position="487"/>
    </location>
</feature>
<feature type="region of interest" description="Interaction with the sliding clamp" evidence="2">
    <location>
        <begin position="229"/>
        <end position="237"/>
    </location>
</feature>
<feature type="active site" description="N6-AMP-lysine intermediate" evidence="3">
    <location>
        <position position="159"/>
    </location>
</feature>
<feature type="binding site" evidence="1">
    <location>
        <position position="164"/>
    </location>
    <ligand>
        <name>ATP</name>
        <dbReference type="ChEBI" id="CHEBI:30616"/>
    </ligand>
</feature>
<feature type="binding site" evidence="1">
    <location>
        <position position="182"/>
    </location>
    <ligand>
        <name>ATP</name>
        <dbReference type="ChEBI" id="CHEBI:30616"/>
    </ligand>
</feature>
<feature type="binding site" evidence="1">
    <location>
        <position position="217"/>
    </location>
    <ligand>
        <name>a divalent metal cation</name>
        <dbReference type="ChEBI" id="CHEBI:60240"/>
        <label>1</label>
    </ligand>
</feature>
<feature type="binding site" evidence="1">
    <location>
        <position position="217"/>
    </location>
    <ligand>
        <name>ATP</name>
        <dbReference type="ChEBI" id="CHEBI:30616"/>
    </ligand>
</feature>
<feature type="binding site" evidence="1">
    <location>
        <position position="344"/>
    </location>
    <ligand>
        <name>a divalent metal cation</name>
        <dbReference type="ChEBI" id="CHEBI:60240"/>
        <label>2</label>
    </ligand>
</feature>
<feature type="binding site" evidence="1">
    <location>
        <position position="359"/>
    </location>
    <ligand>
        <name>ATP</name>
        <dbReference type="ChEBI" id="CHEBI:30616"/>
    </ligand>
</feature>
<feature type="binding site" evidence="1">
    <location>
        <position position="365"/>
    </location>
    <ligand>
        <name>ATP</name>
        <dbReference type="ChEBI" id="CHEBI:30616"/>
    </ligand>
</feature>
<organism>
    <name type="scientific">Enterobacteria phage T6</name>
    <name type="common">Bacteriophage T6</name>
    <dbReference type="NCBI Taxonomy" id="10666"/>
    <lineage>
        <taxon>Viruses</taxon>
        <taxon>Duplodnaviria</taxon>
        <taxon>Heunggongvirae</taxon>
        <taxon>Uroviricota</taxon>
        <taxon>Caudoviricetes</taxon>
        <taxon>Straboviridae</taxon>
        <taxon>Tevenvirinae</taxon>
        <taxon>Tequatrovirus</taxon>
        <taxon>Tequatrovirus T6</taxon>
    </lineage>
</organism>
<dbReference type="EC" id="6.5.1.1" evidence="3"/>
<dbReference type="EMBL" id="M38465">
    <property type="protein sequence ID" value="AAA32562.1"/>
    <property type="molecule type" value="Genomic_DNA"/>
</dbReference>
<dbReference type="PIR" id="S06464">
    <property type="entry name" value="S06464"/>
</dbReference>
<dbReference type="SMR" id="P19088"/>
<dbReference type="GO" id="GO:0005524">
    <property type="term" value="F:ATP binding"/>
    <property type="evidence" value="ECO:0007669"/>
    <property type="project" value="UniProtKB-KW"/>
</dbReference>
<dbReference type="GO" id="GO:0003910">
    <property type="term" value="F:DNA ligase (ATP) activity"/>
    <property type="evidence" value="ECO:0007669"/>
    <property type="project" value="UniProtKB-EC"/>
</dbReference>
<dbReference type="GO" id="GO:0046872">
    <property type="term" value="F:metal ion binding"/>
    <property type="evidence" value="ECO:0007669"/>
    <property type="project" value="UniProtKB-KW"/>
</dbReference>
<dbReference type="GO" id="GO:0006310">
    <property type="term" value="P:DNA recombination"/>
    <property type="evidence" value="ECO:0007669"/>
    <property type="project" value="UniProtKB-KW"/>
</dbReference>
<dbReference type="GO" id="GO:0006281">
    <property type="term" value="P:DNA repair"/>
    <property type="evidence" value="ECO:0007669"/>
    <property type="project" value="UniProtKB-KW"/>
</dbReference>
<dbReference type="GO" id="GO:0006260">
    <property type="term" value="P:DNA replication"/>
    <property type="evidence" value="ECO:0007669"/>
    <property type="project" value="UniProtKB-KW"/>
</dbReference>
<dbReference type="Gene3D" id="3.30.470.30">
    <property type="entry name" value="DNA ligase/mRNA capping enzyme"/>
    <property type="match status" value="1"/>
</dbReference>
<dbReference type="InterPro" id="IPR012310">
    <property type="entry name" value="DNA_ligase_ATP-dep_cent"/>
</dbReference>
<dbReference type="InterPro" id="IPR016059">
    <property type="entry name" value="DNA_ligase_ATP-dep_CS"/>
</dbReference>
<dbReference type="InterPro" id="IPR012340">
    <property type="entry name" value="NA-bd_OB-fold"/>
</dbReference>
<dbReference type="InterPro" id="IPR050326">
    <property type="entry name" value="NAD_dep_DNA_ligaseB"/>
</dbReference>
<dbReference type="PANTHER" id="PTHR47810">
    <property type="entry name" value="DNA LIGASE"/>
    <property type="match status" value="1"/>
</dbReference>
<dbReference type="PANTHER" id="PTHR47810:SF1">
    <property type="entry name" value="DNA LIGASE B"/>
    <property type="match status" value="1"/>
</dbReference>
<dbReference type="Pfam" id="PF01068">
    <property type="entry name" value="DNA_ligase_A_M"/>
    <property type="match status" value="1"/>
</dbReference>
<dbReference type="SUPFAM" id="SSF56091">
    <property type="entry name" value="DNA ligase/mRNA capping enzyme, catalytic domain"/>
    <property type="match status" value="1"/>
</dbReference>
<dbReference type="SUPFAM" id="SSF50249">
    <property type="entry name" value="Nucleic acid-binding proteins"/>
    <property type="match status" value="1"/>
</dbReference>
<dbReference type="PROSITE" id="PS00697">
    <property type="entry name" value="DNA_LIGASE_A1"/>
    <property type="match status" value="1"/>
</dbReference>
<dbReference type="PROSITE" id="PS00333">
    <property type="entry name" value="DNA_LIGASE_A2"/>
    <property type="match status" value="1"/>
</dbReference>